<comment type="function">
    <text evidence="1">Binds to the 23S rRNA.</text>
</comment>
<comment type="subunit">
    <text evidence="1">Part of the 50S ribosomal subunit.</text>
</comment>
<comment type="similarity">
    <text evidence="1">Belongs to the universal ribosomal protein uL15 family.</text>
</comment>
<sequence length="144" mass="15593">MKLHELKPAEGSRQVRNRVGRGTSSGNGKTAGRGQKGQKARGKVRLGFEGGQMPLFRRMPKRGFKNINRKEYAIVNLETLNKFEDGAEVTPALLVESGIIKDEKDGIKVLGNGTLNKQLTVKASKFSASAKEAIESKGGKAEVI</sequence>
<feature type="chain" id="PRO_0000251523" description="Large ribosomal subunit protein uL15">
    <location>
        <begin position="1"/>
        <end position="144"/>
    </location>
</feature>
<feature type="region of interest" description="Disordered" evidence="2">
    <location>
        <begin position="1"/>
        <end position="52"/>
    </location>
</feature>
<feature type="compositionally biased region" description="Basic and acidic residues" evidence="2">
    <location>
        <begin position="1"/>
        <end position="10"/>
    </location>
</feature>
<feature type="compositionally biased region" description="Gly residues" evidence="2">
    <location>
        <begin position="23"/>
        <end position="35"/>
    </location>
</feature>
<reference key="1">
    <citation type="journal article" date="2006" name="Proc. Natl. Acad. Sci. U.S.A.">
        <title>Multireplicon genome architecture of Lactobacillus salivarius.</title>
        <authorList>
            <person name="Claesson M.J."/>
            <person name="Li Y."/>
            <person name="Leahy S."/>
            <person name="Canchaya C."/>
            <person name="van Pijkeren J.P."/>
            <person name="Cerdeno-Tarraga A.M."/>
            <person name="Parkhill J."/>
            <person name="Flynn S."/>
            <person name="O'Sullivan G.C."/>
            <person name="Collins J.K."/>
            <person name="Higgins D."/>
            <person name="Shanahan F."/>
            <person name="Fitzgerald G.F."/>
            <person name="van Sinderen D."/>
            <person name="O'Toole P.W."/>
        </authorList>
    </citation>
    <scope>NUCLEOTIDE SEQUENCE [LARGE SCALE GENOMIC DNA]</scope>
    <source>
        <strain>UCC118</strain>
    </source>
</reference>
<keyword id="KW-1185">Reference proteome</keyword>
<keyword id="KW-0687">Ribonucleoprotein</keyword>
<keyword id="KW-0689">Ribosomal protein</keyword>
<keyword id="KW-0694">RNA-binding</keyword>
<keyword id="KW-0699">rRNA-binding</keyword>
<evidence type="ECO:0000255" key="1">
    <source>
        <dbReference type="HAMAP-Rule" id="MF_01341"/>
    </source>
</evidence>
<evidence type="ECO:0000256" key="2">
    <source>
        <dbReference type="SAM" id="MobiDB-lite"/>
    </source>
</evidence>
<evidence type="ECO:0000305" key="3"/>
<proteinExistence type="inferred from homology"/>
<gene>
    <name evidence="1" type="primary">rplO</name>
    <name type="ordered locus">LSL_1416</name>
</gene>
<protein>
    <recommendedName>
        <fullName evidence="1">Large ribosomal subunit protein uL15</fullName>
    </recommendedName>
    <alternativeName>
        <fullName evidence="3">50S ribosomal protein L15</fullName>
    </alternativeName>
</protein>
<accession>Q1WSA9</accession>
<dbReference type="EMBL" id="CP000233">
    <property type="protein sequence ID" value="ABE00220.1"/>
    <property type="molecule type" value="Genomic_DNA"/>
</dbReference>
<dbReference type="RefSeq" id="WP_003701328.1">
    <property type="nucleotide sequence ID" value="NC_007929.1"/>
</dbReference>
<dbReference type="RefSeq" id="YP_536303.1">
    <property type="nucleotide sequence ID" value="NC_007929.1"/>
</dbReference>
<dbReference type="SMR" id="Q1WSA9"/>
<dbReference type="STRING" id="362948.LSL_1416"/>
<dbReference type="GeneID" id="89466151"/>
<dbReference type="KEGG" id="lsl:LSL_1416"/>
<dbReference type="PATRIC" id="fig|362948.14.peg.1499"/>
<dbReference type="HOGENOM" id="CLU_055188_4_2_9"/>
<dbReference type="OrthoDB" id="9810293at2"/>
<dbReference type="Proteomes" id="UP000006559">
    <property type="component" value="Chromosome"/>
</dbReference>
<dbReference type="GO" id="GO:0022625">
    <property type="term" value="C:cytosolic large ribosomal subunit"/>
    <property type="evidence" value="ECO:0007669"/>
    <property type="project" value="TreeGrafter"/>
</dbReference>
<dbReference type="GO" id="GO:0019843">
    <property type="term" value="F:rRNA binding"/>
    <property type="evidence" value="ECO:0007669"/>
    <property type="project" value="UniProtKB-UniRule"/>
</dbReference>
<dbReference type="GO" id="GO:0003735">
    <property type="term" value="F:structural constituent of ribosome"/>
    <property type="evidence" value="ECO:0007669"/>
    <property type="project" value="InterPro"/>
</dbReference>
<dbReference type="GO" id="GO:0006412">
    <property type="term" value="P:translation"/>
    <property type="evidence" value="ECO:0007669"/>
    <property type="project" value="UniProtKB-UniRule"/>
</dbReference>
<dbReference type="FunFam" id="3.100.10.10:FF:000004">
    <property type="entry name" value="50S ribosomal protein L15"/>
    <property type="match status" value="1"/>
</dbReference>
<dbReference type="Gene3D" id="3.100.10.10">
    <property type="match status" value="1"/>
</dbReference>
<dbReference type="HAMAP" id="MF_01341">
    <property type="entry name" value="Ribosomal_uL15"/>
    <property type="match status" value="1"/>
</dbReference>
<dbReference type="InterPro" id="IPR030878">
    <property type="entry name" value="Ribosomal_uL15"/>
</dbReference>
<dbReference type="InterPro" id="IPR021131">
    <property type="entry name" value="Ribosomal_uL15/eL18"/>
</dbReference>
<dbReference type="InterPro" id="IPR036227">
    <property type="entry name" value="Ribosomal_uL15/eL18_sf"/>
</dbReference>
<dbReference type="InterPro" id="IPR005749">
    <property type="entry name" value="Ribosomal_uL15_bac-type"/>
</dbReference>
<dbReference type="InterPro" id="IPR001196">
    <property type="entry name" value="Ribosomal_uL15_CS"/>
</dbReference>
<dbReference type="NCBIfam" id="TIGR01071">
    <property type="entry name" value="rplO_bact"/>
    <property type="match status" value="1"/>
</dbReference>
<dbReference type="PANTHER" id="PTHR12934">
    <property type="entry name" value="50S RIBOSOMAL PROTEIN L15"/>
    <property type="match status" value="1"/>
</dbReference>
<dbReference type="PANTHER" id="PTHR12934:SF11">
    <property type="entry name" value="LARGE RIBOSOMAL SUBUNIT PROTEIN UL15M"/>
    <property type="match status" value="1"/>
</dbReference>
<dbReference type="Pfam" id="PF00828">
    <property type="entry name" value="Ribosomal_L27A"/>
    <property type="match status" value="1"/>
</dbReference>
<dbReference type="SUPFAM" id="SSF52080">
    <property type="entry name" value="Ribosomal proteins L15p and L18e"/>
    <property type="match status" value="1"/>
</dbReference>
<dbReference type="PROSITE" id="PS00475">
    <property type="entry name" value="RIBOSOMAL_L15"/>
    <property type="match status" value="1"/>
</dbReference>
<organism>
    <name type="scientific">Ligilactobacillus salivarius (strain UCC118)</name>
    <name type="common">Lactobacillus salivarius</name>
    <dbReference type="NCBI Taxonomy" id="362948"/>
    <lineage>
        <taxon>Bacteria</taxon>
        <taxon>Bacillati</taxon>
        <taxon>Bacillota</taxon>
        <taxon>Bacilli</taxon>
        <taxon>Lactobacillales</taxon>
        <taxon>Lactobacillaceae</taxon>
        <taxon>Ligilactobacillus</taxon>
    </lineage>
</organism>
<name>RL15_LIGS1</name>